<evidence type="ECO:0000250" key="1">
    <source>
        <dbReference type="UniProtKB" id="P0A742"/>
    </source>
</evidence>
<evidence type="ECO:0000250" key="2">
    <source>
        <dbReference type="UniProtKB" id="P9WJN5"/>
    </source>
</evidence>
<evidence type="ECO:0000255" key="3">
    <source>
        <dbReference type="HAMAP-Rule" id="MF_00115"/>
    </source>
</evidence>
<evidence type="ECO:0000269" key="4">
    <source>
    </source>
</evidence>
<evidence type="ECO:0000305" key="5"/>
<keyword id="KW-0997">Cell inner membrane</keyword>
<keyword id="KW-1003">Cell membrane</keyword>
<keyword id="KW-0407">Ion channel</keyword>
<keyword id="KW-0406">Ion transport</keyword>
<keyword id="KW-0472">Membrane</keyword>
<keyword id="KW-0812">Transmembrane</keyword>
<keyword id="KW-1133">Transmembrane helix</keyword>
<keyword id="KW-0813">Transport</keyword>
<proteinExistence type="inferred from homology"/>
<feature type="chain" id="PRO_0000192442" description="Large-conductance mechanosensitive channel">
    <location>
        <begin position="1"/>
        <end position="137"/>
    </location>
</feature>
<feature type="topological domain" description="Cytoplasmic" evidence="2">
    <location>
        <begin position="1"/>
        <end position="16"/>
    </location>
</feature>
<feature type="transmembrane region" description="Helical" evidence="2">
    <location>
        <begin position="17"/>
        <end position="45"/>
    </location>
</feature>
<feature type="topological domain" description="Periplasmic" evidence="2">
    <location>
        <begin position="46"/>
        <end position="74"/>
    </location>
</feature>
<feature type="transmembrane region" description="Helical" evidence="2">
    <location>
        <begin position="75"/>
        <end position="94"/>
    </location>
</feature>
<feature type="topological domain" description="Cytoplasmic" evidence="2">
    <location>
        <begin position="95"/>
        <end position="137"/>
    </location>
</feature>
<comment type="function">
    <text evidence="4">Channel that opens in response to stretch forces in the membrane lipid bilayer. Forms a nonselective ion channel with a conductance of about 4 nanosiemens. May participate in the regulation of osmotic pressure changes within the cell.</text>
</comment>
<comment type="subunit">
    <text evidence="1 3">Homopentamer.</text>
</comment>
<comment type="subcellular location">
    <subcellularLocation>
        <location evidence="3 4">Cell inner membrane</location>
        <topology evidence="3">Multi-pass membrane protein</topology>
    </subcellularLocation>
</comment>
<comment type="similarity">
    <text evidence="3 5">Belongs to the MscL family.</text>
</comment>
<organism>
    <name type="scientific">Pectobacterium carotovorum</name>
    <name type="common">Erwinia carotovora</name>
    <dbReference type="NCBI Taxonomy" id="554"/>
    <lineage>
        <taxon>Bacteria</taxon>
        <taxon>Pseudomonadati</taxon>
        <taxon>Pseudomonadota</taxon>
        <taxon>Gammaproteobacteria</taxon>
        <taxon>Enterobacterales</taxon>
        <taxon>Pectobacteriaceae</taxon>
        <taxon>Pectobacterium</taxon>
    </lineage>
</organism>
<protein>
    <recommendedName>
        <fullName evidence="3">Large-conductance mechanosensitive channel</fullName>
    </recommendedName>
</protein>
<reference key="1">
    <citation type="journal article" date="1998" name="Mol. Microbiol.">
        <title>Functional and structural conservation in the mechanosensitive channel mscL implicates elements crucial for mechanosensation.</title>
        <authorList>
            <person name="Moe P.C."/>
            <person name="Blount P."/>
            <person name="Kung C."/>
        </authorList>
    </citation>
    <scope>NUCLEOTIDE SEQUENCE [GENOMIC DNA]</scope>
    <scope>FUNCTION</scope>
    <scope>SUBCELLULAR LOCATION</scope>
</reference>
<dbReference type="EMBL" id="AF029730">
    <property type="protein sequence ID" value="AAC38559.1"/>
    <property type="molecule type" value="Genomic_DNA"/>
</dbReference>
<dbReference type="SMR" id="O68284"/>
<dbReference type="GO" id="GO:0005886">
    <property type="term" value="C:plasma membrane"/>
    <property type="evidence" value="ECO:0007669"/>
    <property type="project" value="UniProtKB-SubCell"/>
</dbReference>
<dbReference type="GO" id="GO:0008381">
    <property type="term" value="F:mechanosensitive monoatomic ion channel activity"/>
    <property type="evidence" value="ECO:0007669"/>
    <property type="project" value="UniProtKB-UniRule"/>
</dbReference>
<dbReference type="FunFam" id="1.10.1200.120:FF:000001">
    <property type="entry name" value="Large-conductance mechanosensitive channel"/>
    <property type="match status" value="1"/>
</dbReference>
<dbReference type="Gene3D" id="1.10.1200.120">
    <property type="entry name" value="Large-conductance mechanosensitive channel, MscL, domain 1"/>
    <property type="match status" value="1"/>
</dbReference>
<dbReference type="HAMAP" id="MF_00115">
    <property type="entry name" value="MscL"/>
    <property type="match status" value="1"/>
</dbReference>
<dbReference type="InterPro" id="IPR019823">
    <property type="entry name" value="Mechanosensitive_channel_CS"/>
</dbReference>
<dbReference type="InterPro" id="IPR001185">
    <property type="entry name" value="MS_channel"/>
</dbReference>
<dbReference type="InterPro" id="IPR037673">
    <property type="entry name" value="MSC/AndL"/>
</dbReference>
<dbReference type="InterPro" id="IPR036019">
    <property type="entry name" value="MscL_channel"/>
</dbReference>
<dbReference type="NCBIfam" id="TIGR00220">
    <property type="entry name" value="mscL"/>
    <property type="match status" value="1"/>
</dbReference>
<dbReference type="NCBIfam" id="NF001841">
    <property type="entry name" value="PRK00567.1-1"/>
    <property type="match status" value="1"/>
</dbReference>
<dbReference type="NCBIfam" id="NF001843">
    <property type="entry name" value="PRK00567.1-4"/>
    <property type="match status" value="1"/>
</dbReference>
<dbReference type="PANTHER" id="PTHR30266:SF2">
    <property type="entry name" value="LARGE-CONDUCTANCE MECHANOSENSITIVE CHANNEL"/>
    <property type="match status" value="1"/>
</dbReference>
<dbReference type="PANTHER" id="PTHR30266">
    <property type="entry name" value="MECHANOSENSITIVE CHANNEL MSCL"/>
    <property type="match status" value="1"/>
</dbReference>
<dbReference type="Pfam" id="PF01741">
    <property type="entry name" value="MscL"/>
    <property type="match status" value="1"/>
</dbReference>
<dbReference type="PRINTS" id="PR01264">
    <property type="entry name" value="MECHCHANNEL"/>
</dbReference>
<dbReference type="SUPFAM" id="SSF81330">
    <property type="entry name" value="Gated mechanosensitive channel"/>
    <property type="match status" value="1"/>
</dbReference>
<dbReference type="PROSITE" id="PS01327">
    <property type="entry name" value="MSCL"/>
    <property type="match status" value="1"/>
</dbReference>
<gene>
    <name evidence="3" type="primary">mscL</name>
</gene>
<accession>O68284</accession>
<sequence length="137" mass="15112">MSIIKEFREFAMRGNVVDLAVGVIIGALFGKIVSSLVSDIIMPPLGLLIGGVDFKQFALFLRNAQGGIPAVVMNYGAFIQNIFDFIIVAFAIFIAIKLMNKMRCKQEDTPAAPPKPSAEEKLLAEIRDLLKEQQTRQ</sequence>
<name>MSCL_PECCA</name>